<comment type="function">
    <text evidence="1">Catalyzes the condensation of the acetyl group of acetyl-CoA with 3-methyl-2-oxobutanoate (2-ketoisovalerate) to form 3-carboxy-3-hydroxy-4-methylpentanoate (2-isopropylmalate).</text>
</comment>
<comment type="catalytic activity">
    <reaction evidence="1">
        <text>3-methyl-2-oxobutanoate + acetyl-CoA + H2O = (2S)-2-isopropylmalate + CoA + H(+)</text>
        <dbReference type="Rhea" id="RHEA:21524"/>
        <dbReference type="ChEBI" id="CHEBI:1178"/>
        <dbReference type="ChEBI" id="CHEBI:11851"/>
        <dbReference type="ChEBI" id="CHEBI:15377"/>
        <dbReference type="ChEBI" id="CHEBI:15378"/>
        <dbReference type="ChEBI" id="CHEBI:57287"/>
        <dbReference type="ChEBI" id="CHEBI:57288"/>
        <dbReference type="EC" id="2.3.3.13"/>
    </reaction>
</comment>
<comment type="cofactor">
    <cofactor evidence="1">
        <name>Mn(2+)</name>
        <dbReference type="ChEBI" id="CHEBI:29035"/>
    </cofactor>
</comment>
<comment type="pathway">
    <text evidence="1">Amino-acid biosynthesis; L-leucine biosynthesis; L-leucine from 3-methyl-2-oxobutanoate: step 1/4.</text>
</comment>
<comment type="subunit">
    <text evidence="1">Homodimer.</text>
</comment>
<comment type="subcellular location">
    <subcellularLocation>
        <location evidence="1">Cytoplasm</location>
    </subcellularLocation>
</comment>
<comment type="similarity">
    <text evidence="1">Belongs to the alpha-IPM synthase/homocitrate synthase family. LeuA type 1 subfamily.</text>
</comment>
<sequence>MKDHLIVFDTTLRDGEQSPGASMTRDEKLRIARQLERMRVDVIEAGFPAASNGDFESVRAIAEAIRESTVCGLARANEADIRRAGEAIAPAARGRIHTFIATSPIHMEMKLRMSPDQVVEQAVRAIGWAKEYTDDIEFSAEDAGRSEIDFLCRIFEAVIKAGAKTINVPDTVGYNVPEQYAHTIRTLIERVPGADKVVWSVHCHNDLGLAVANSLAAVMAGARQVECTLNGLGERAGNAALEELVMAVRTRQDVFPCDTRIDATQIVPASKLVSGVTGFPVQPNKAIVGANAFAHESGIHQDGVLKHRETYEIMRAEDVGWGANKLVLGKHSGRNAFRSRLQEIGIVVASEEHLNHAFARFKELADKKHEIFDEDIQALMSDEVVTPDQEHYRLVASRFHSETGETPRADLTLSVDGQETRTSAEGSGPVDAAFKAIEAIAGSGTELLLYSVNAITTGTDAQGEVTVRLAREDKVVNGQGADTDIIVASAKAYLNALNKLHSKLERLNPQL</sequence>
<keyword id="KW-0028">Amino-acid biosynthesis</keyword>
<keyword id="KW-0100">Branched-chain amino acid biosynthesis</keyword>
<keyword id="KW-0963">Cytoplasm</keyword>
<keyword id="KW-0432">Leucine biosynthesis</keyword>
<keyword id="KW-0464">Manganese</keyword>
<keyword id="KW-0479">Metal-binding</keyword>
<keyword id="KW-1185">Reference proteome</keyword>
<keyword id="KW-0808">Transferase</keyword>
<organism>
    <name type="scientific">Aromatoleum aromaticum (strain DSM 19018 / LMG 30748 / EbN1)</name>
    <name type="common">Azoarcus sp. (strain EbN1)</name>
    <dbReference type="NCBI Taxonomy" id="76114"/>
    <lineage>
        <taxon>Bacteria</taxon>
        <taxon>Pseudomonadati</taxon>
        <taxon>Pseudomonadota</taxon>
        <taxon>Betaproteobacteria</taxon>
        <taxon>Rhodocyclales</taxon>
        <taxon>Rhodocyclaceae</taxon>
        <taxon>Aromatoleum</taxon>
    </lineage>
</organism>
<evidence type="ECO:0000255" key="1">
    <source>
        <dbReference type="HAMAP-Rule" id="MF_01025"/>
    </source>
</evidence>
<dbReference type="EC" id="2.3.3.13" evidence="1"/>
<dbReference type="EMBL" id="CR555306">
    <property type="protein sequence ID" value="CAI10182.1"/>
    <property type="molecule type" value="Genomic_DNA"/>
</dbReference>
<dbReference type="RefSeq" id="WP_011239827.1">
    <property type="nucleotide sequence ID" value="NC_006513.1"/>
</dbReference>
<dbReference type="SMR" id="Q5NXN2"/>
<dbReference type="STRING" id="76114.ebA7154"/>
<dbReference type="KEGG" id="eba:ebA7154"/>
<dbReference type="eggNOG" id="COG0119">
    <property type="taxonomic scope" value="Bacteria"/>
</dbReference>
<dbReference type="HOGENOM" id="CLU_022158_0_1_4"/>
<dbReference type="OrthoDB" id="9803573at2"/>
<dbReference type="UniPathway" id="UPA00048">
    <property type="reaction ID" value="UER00070"/>
</dbReference>
<dbReference type="Proteomes" id="UP000006552">
    <property type="component" value="Chromosome"/>
</dbReference>
<dbReference type="GO" id="GO:0005829">
    <property type="term" value="C:cytosol"/>
    <property type="evidence" value="ECO:0007669"/>
    <property type="project" value="TreeGrafter"/>
</dbReference>
<dbReference type="GO" id="GO:0003852">
    <property type="term" value="F:2-isopropylmalate synthase activity"/>
    <property type="evidence" value="ECO:0007669"/>
    <property type="project" value="UniProtKB-UniRule"/>
</dbReference>
<dbReference type="GO" id="GO:0003985">
    <property type="term" value="F:acetyl-CoA C-acetyltransferase activity"/>
    <property type="evidence" value="ECO:0007669"/>
    <property type="project" value="UniProtKB-UniRule"/>
</dbReference>
<dbReference type="GO" id="GO:0030145">
    <property type="term" value="F:manganese ion binding"/>
    <property type="evidence" value="ECO:0007669"/>
    <property type="project" value="UniProtKB-UniRule"/>
</dbReference>
<dbReference type="GO" id="GO:0009098">
    <property type="term" value="P:L-leucine biosynthetic process"/>
    <property type="evidence" value="ECO:0007669"/>
    <property type="project" value="UniProtKB-UniRule"/>
</dbReference>
<dbReference type="CDD" id="cd07940">
    <property type="entry name" value="DRE_TIM_IPMS"/>
    <property type="match status" value="1"/>
</dbReference>
<dbReference type="FunFam" id="1.10.238.260:FF:000001">
    <property type="entry name" value="2-isopropylmalate synthase"/>
    <property type="match status" value="1"/>
</dbReference>
<dbReference type="FunFam" id="3.20.20.70:FF:000010">
    <property type="entry name" value="2-isopropylmalate synthase"/>
    <property type="match status" value="1"/>
</dbReference>
<dbReference type="FunFam" id="3.30.160.270:FF:000003">
    <property type="entry name" value="2-isopropylmalate synthase"/>
    <property type="match status" value="1"/>
</dbReference>
<dbReference type="Gene3D" id="1.10.238.260">
    <property type="match status" value="1"/>
</dbReference>
<dbReference type="Gene3D" id="3.30.160.270">
    <property type="match status" value="1"/>
</dbReference>
<dbReference type="Gene3D" id="3.20.20.70">
    <property type="entry name" value="Aldolase class I"/>
    <property type="match status" value="1"/>
</dbReference>
<dbReference type="HAMAP" id="MF_01025">
    <property type="entry name" value="LeuA_type1"/>
    <property type="match status" value="1"/>
</dbReference>
<dbReference type="InterPro" id="IPR050073">
    <property type="entry name" value="2-IPM_HCS-like"/>
</dbReference>
<dbReference type="InterPro" id="IPR013709">
    <property type="entry name" value="2-isopropylmalate_synth_dimer"/>
</dbReference>
<dbReference type="InterPro" id="IPR002034">
    <property type="entry name" value="AIPM/Hcit_synth_CS"/>
</dbReference>
<dbReference type="InterPro" id="IPR013785">
    <property type="entry name" value="Aldolase_TIM"/>
</dbReference>
<dbReference type="InterPro" id="IPR054691">
    <property type="entry name" value="LeuA/HCS_post-cat"/>
</dbReference>
<dbReference type="InterPro" id="IPR036230">
    <property type="entry name" value="LeuA_allosteric_dom_sf"/>
</dbReference>
<dbReference type="InterPro" id="IPR005671">
    <property type="entry name" value="LeuA_bact_synth"/>
</dbReference>
<dbReference type="InterPro" id="IPR000891">
    <property type="entry name" value="PYR_CT"/>
</dbReference>
<dbReference type="NCBIfam" id="TIGR00973">
    <property type="entry name" value="leuA_bact"/>
    <property type="match status" value="1"/>
</dbReference>
<dbReference type="NCBIfam" id="NF002086">
    <property type="entry name" value="PRK00915.1-3"/>
    <property type="match status" value="1"/>
</dbReference>
<dbReference type="NCBIfam" id="NF002087">
    <property type="entry name" value="PRK00915.1-4"/>
    <property type="match status" value="1"/>
</dbReference>
<dbReference type="PANTHER" id="PTHR10277:SF9">
    <property type="entry name" value="2-ISOPROPYLMALATE SYNTHASE 1, CHLOROPLASTIC-RELATED"/>
    <property type="match status" value="1"/>
</dbReference>
<dbReference type="PANTHER" id="PTHR10277">
    <property type="entry name" value="HOMOCITRATE SYNTHASE-RELATED"/>
    <property type="match status" value="1"/>
</dbReference>
<dbReference type="Pfam" id="PF22617">
    <property type="entry name" value="HCS_D2"/>
    <property type="match status" value="1"/>
</dbReference>
<dbReference type="Pfam" id="PF00682">
    <property type="entry name" value="HMGL-like"/>
    <property type="match status" value="1"/>
</dbReference>
<dbReference type="Pfam" id="PF08502">
    <property type="entry name" value="LeuA_dimer"/>
    <property type="match status" value="1"/>
</dbReference>
<dbReference type="SMART" id="SM00917">
    <property type="entry name" value="LeuA_dimer"/>
    <property type="match status" value="1"/>
</dbReference>
<dbReference type="SUPFAM" id="SSF110921">
    <property type="entry name" value="2-isopropylmalate synthase LeuA, allosteric (dimerisation) domain"/>
    <property type="match status" value="1"/>
</dbReference>
<dbReference type="SUPFAM" id="SSF51569">
    <property type="entry name" value="Aldolase"/>
    <property type="match status" value="1"/>
</dbReference>
<dbReference type="PROSITE" id="PS00815">
    <property type="entry name" value="AIPM_HOMOCIT_SYNTH_1"/>
    <property type="match status" value="1"/>
</dbReference>
<dbReference type="PROSITE" id="PS00816">
    <property type="entry name" value="AIPM_HOMOCIT_SYNTH_2"/>
    <property type="match status" value="1"/>
</dbReference>
<dbReference type="PROSITE" id="PS50991">
    <property type="entry name" value="PYR_CT"/>
    <property type="match status" value="1"/>
</dbReference>
<proteinExistence type="inferred from homology"/>
<accession>Q5NXN2</accession>
<feature type="chain" id="PRO_1000149124" description="2-isopropylmalate synthase">
    <location>
        <begin position="1"/>
        <end position="511"/>
    </location>
</feature>
<feature type="domain" description="Pyruvate carboxyltransferase" evidence="1">
    <location>
        <begin position="5"/>
        <end position="267"/>
    </location>
</feature>
<feature type="region of interest" description="Regulatory domain" evidence="1">
    <location>
        <begin position="393"/>
        <end position="511"/>
    </location>
</feature>
<feature type="binding site" evidence="1">
    <location>
        <position position="14"/>
    </location>
    <ligand>
        <name>Mn(2+)</name>
        <dbReference type="ChEBI" id="CHEBI:29035"/>
    </ligand>
</feature>
<feature type="binding site" evidence="1">
    <location>
        <position position="202"/>
    </location>
    <ligand>
        <name>Mn(2+)</name>
        <dbReference type="ChEBI" id="CHEBI:29035"/>
    </ligand>
</feature>
<feature type="binding site" evidence="1">
    <location>
        <position position="204"/>
    </location>
    <ligand>
        <name>Mn(2+)</name>
        <dbReference type="ChEBI" id="CHEBI:29035"/>
    </ligand>
</feature>
<feature type="binding site" evidence="1">
    <location>
        <position position="238"/>
    </location>
    <ligand>
        <name>Mn(2+)</name>
        <dbReference type="ChEBI" id="CHEBI:29035"/>
    </ligand>
</feature>
<gene>
    <name evidence="1" type="primary">leuA</name>
    <name type="ordered locus">AZOSEA40570</name>
    <name type="ORF">ebA7154</name>
</gene>
<name>LEU1_AROAE</name>
<reference key="1">
    <citation type="journal article" date="2005" name="Arch. Microbiol.">
        <title>The genome sequence of an anaerobic aromatic-degrading denitrifying bacterium, strain EbN1.</title>
        <authorList>
            <person name="Rabus R."/>
            <person name="Kube M."/>
            <person name="Heider J."/>
            <person name="Beck A."/>
            <person name="Heitmann K."/>
            <person name="Widdel F."/>
            <person name="Reinhardt R."/>
        </authorList>
    </citation>
    <scope>NUCLEOTIDE SEQUENCE [LARGE SCALE GENOMIC DNA]</scope>
    <source>
        <strain>DSM 19018 / LMG 30748 / EbN1</strain>
    </source>
</reference>
<protein>
    <recommendedName>
        <fullName evidence="1">2-isopropylmalate synthase</fullName>
        <ecNumber evidence="1">2.3.3.13</ecNumber>
    </recommendedName>
    <alternativeName>
        <fullName evidence="1">Alpha-IPM synthase</fullName>
    </alternativeName>
    <alternativeName>
        <fullName evidence="1">Alpha-isopropylmalate synthase</fullName>
    </alternativeName>
</protein>